<comment type="function">
    <text evidence="1">Involved in the modulation of the specificity of the ClpAP-mediated ATP-dependent protein degradation.</text>
</comment>
<comment type="subunit">
    <text evidence="1">Binds to the N-terminal domain of the chaperone ClpA.</text>
</comment>
<comment type="similarity">
    <text evidence="1">Belongs to the ClpS family.</text>
</comment>
<feature type="chain" id="PRO_1000115487" description="ATP-dependent Clp protease adapter protein ClpS">
    <location>
        <begin position="1"/>
        <end position="106"/>
    </location>
</feature>
<feature type="region of interest" description="Disordered" evidence="2">
    <location>
        <begin position="1"/>
        <end position="23"/>
    </location>
</feature>
<feature type="compositionally biased region" description="Basic and acidic residues" evidence="2">
    <location>
        <begin position="1"/>
        <end position="10"/>
    </location>
</feature>
<organism>
    <name type="scientific">Xylella fastidiosa (strain M12)</name>
    <dbReference type="NCBI Taxonomy" id="405440"/>
    <lineage>
        <taxon>Bacteria</taxon>
        <taxon>Pseudomonadati</taxon>
        <taxon>Pseudomonadota</taxon>
        <taxon>Gammaproteobacteria</taxon>
        <taxon>Lysobacterales</taxon>
        <taxon>Lysobacteraceae</taxon>
        <taxon>Xylella</taxon>
    </lineage>
</organism>
<gene>
    <name evidence="1" type="primary">clpS</name>
    <name type="ordered locus">Xfasm12_0785</name>
</gene>
<protein>
    <recommendedName>
        <fullName evidence="1">ATP-dependent Clp protease adapter protein ClpS</fullName>
    </recommendedName>
</protein>
<evidence type="ECO:0000255" key="1">
    <source>
        <dbReference type="HAMAP-Rule" id="MF_00302"/>
    </source>
</evidence>
<evidence type="ECO:0000256" key="2">
    <source>
        <dbReference type="SAM" id="MobiDB-lite"/>
    </source>
</evidence>
<reference key="1">
    <citation type="journal article" date="2010" name="J. Bacteriol.">
        <title>Whole genome sequences of two Xylella fastidiosa strains (M12 and M23) causing almond leaf scorch disease in California.</title>
        <authorList>
            <person name="Chen J."/>
            <person name="Xie G."/>
            <person name="Han S."/>
            <person name="Chertkov O."/>
            <person name="Sims D."/>
            <person name="Civerolo E.L."/>
        </authorList>
    </citation>
    <scope>NUCLEOTIDE SEQUENCE [LARGE SCALE GENOMIC DNA]</scope>
    <source>
        <strain>M12</strain>
    </source>
</reference>
<dbReference type="EMBL" id="CP000941">
    <property type="protein sequence ID" value="ACA11775.1"/>
    <property type="molecule type" value="Genomic_DNA"/>
</dbReference>
<dbReference type="RefSeq" id="WP_004083751.1">
    <property type="nucleotide sequence ID" value="NC_010513.1"/>
</dbReference>
<dbReference type="SMR" id="B0U6Q9"/>
<dbReference type="GeneID" id="93904442"/>
<dbReference type="KEGG" id="xfm:Xfasm12_0785"/>
<dbReference type="HOGENOM" id="CLU_134358_2_1_6"/>
<dbReference type="GO" id="GO:0030163">
    <property type="term" value="P:protein catabolic process"/>
    <property type="evidence" value="ECO:0007669"/>
    <property type="project" value="InterPro"/>
</dbReference>
<dbReference type="GO" id="GO:0006508">
    <property type="term" value="P:proteolysis"/>
    <property type="evidence" value="ECO:0007669"/>
    <property type="project" value="UniProtKB-UniRule"/>
</dbReference>
<dbReference type="FunFam" id="3.30.1390.10:FF:000002">
    <property type="entry name" value="ATP-dependent Clp protease adapter protein ClpS"/>
    <property type="match status" value="1"/>
</dbReference>
<dbReference type="Gene3D" id="3.30.1390.10">
    <property type="match status" value="1"/>
</dbReference>
<dbReference type="HAMAP" id="MF_00302">
    <property type="entry name" value="ClpS"/>
    <property type="match status" value="1"/>
</dbReference>
<dbReference type="InterPro" id="IPR022935">
    <property type="entry name" value="ClpS"/>
</dbReference>
<dbReference type="InterPro" id="IPR003769">
    <property type="entry name" value="ClpS_core"/>
</dbReference>
<dbReference type="InterPro" id="IPR014719">
    <property type="entry name" value="Ribosomal_bL12_C/ClpS-like"/>
</dbReference>
<dbReference type="NCBIfam" id="NF000672">
    <property type="entry name" value="PRK00033.1-5"/>
    <property type="match status" value="1"/>
</dbReference>
<dbReference type="PANTHER" id="PTHR33473:SF19">
    <property type="entry name" value="ATP-DEPENDENT CLP PROTEASE ADAPTER PROTEIN CLPS"/>
    <property type="match status" value="1"/>
</dbReference>
<dbReference type="PANTHER" id="PTHR33473">
    <property type="entry name" value="ATP-DEPENDENT CLP PROTEASE ADAPTER PROTEIN CLPS1, CHLOROPLASTIC"/>
    <property type="match status" value="1"/>
</dbReference>
<dbReference type="Pfam" id="PF02617">
    <property type="entry name" value="ClpS"/>
    <property type="match status" value="1"/>
</dbReference>
<dbReference type="SUPFAM" id="SSF54736">
    <property type="entry name" value="ClpS-like"/>
    <property type="match status" value="1"/>
</dbReference>
<name>CLPS_XYLFM</name>
<accession>B0U6Q9</accession>
<proteinExistence type="inferred from homology"/>
<sequence>MSQKTVHDQDNALLLETGNTKVAPPPRYQVLLLNDDYTPMDFVIVVLQQFFAMDLKKATQVMLHVHTRGRGVCGFYTREVAESKVAQVNEFSRIHQHPLLCTMKQA</sequence>